<evidence type="ECO:0000255" key="1">
    <source>
        <dbReference type="HAMAP-Rule" id="MF_01075"/>
    </source>
</evidence>
<dbReference type="EMBL" id="CP000720">
    <property type="protein sequence ID" value="ABS47157.1"/>
    <property type="molecule type" value="Genomic_DNA"/>
</dbReference>
<dbReference type="RefSeq" id="WP_011192618.1">
    <property type="nucleotide sequence ID" value="NC_009708.1"/>
</dbReference>
<dbReference type="SMR" id="A7FGZ9"/>
<dbReference type="KEGG" id="ypi:YpsIP31758_1549"/>
<dbReference type="HOGENOM" id="CLU_005912_9_2_6"/>
<dbReference type="Proteomes" id="UP000002412">
    <property type="component" value="Chromosome"/>
</dbReference>
<dbReference type="GO" id="GO:0005886">
    <property type="term" value="C:plasma membrane"/>
    <property type="evidence" value="ECO:0007669"/>
    <property type="project" value="UniProtKB-SubCell"/>
</dbReference>
<dbReference type="GO" id="GO:0050660">
    <property type="term" value="F:flavin adenine dinucleotide binding"/>
    <property type="evidence" value="ECO:0007669"/>
    <property type="project" value="InterPro"/>
</dbReference>
<dbReference type="GO" id="GO:0015386">
    <property type="term" value="F:potassium:proton antiporter activity"/>
    <property type="evidence" value="ECO:0007669"/>
    <property type="project" value="UniProtKB-UniRule"/>
</dbReference>
<dbReference type="GO" id="GO:0006884">
    <property type="term" value="P:cell volume homeostasis"/>
    <property type="evidence" value="ECO:0007669"/>
    <property type="project" value="InterPro"/>
</dbReference>
<dbReference type="Gene3D" id="1.20.1530.20">
    <property type="match status" value="1"/>
</dbReference>
<dbReference type="Gene3D" id="3.30.465.10">
    <property type="match status" value="1"/>
</dbReference>
<dbReference type="Gene3D" id="3.30.70.1450">
    <property type="entry name" value="Regulator of K+ conductance, C-terminal domain"/>
    <property type="match status" value="1"/>
</dbReference>
<dbReference type="HAMAP" id="MF_01075">
    <property type="entry name" value="NhaP2"/>
    <property type="match status" value="1"/>
</dbReference>
<dbReference type="InterPro" id="IPR006153">
    <property type="entry name" value="Cation/H_exchanger_TM"/>
</dbReference>
<dbReference type="InterPro" id="IPR036318">
    <property type="entry name" value="FAD-bd_PCMH-like_sf"/>
</dbReference>
<dbReference type="InterPro" id="IPR016169">
    <property type="entry name" value="FAD-bd_PCMH_sub2"/>
</dbReference>
<dbReference type="InterPro" id="IPR038770">
    <property type="entry name" value="Na+/solute_symporter_sf"/>
</dbReference>
<dbReference type="InterPro" id="IPR023729">
    <property type="entry name" value="NhaP2"/>
</dbReference>
<dbReference type="InterPro" id="IPR006037">
    <property type="entry name" value="RCK_C"/>
</dbReference>
<dbReference type="InterPro" id="IPR036721">
    <property type="entry name" value="RCK_C_sf"/>
</dbReference>
<dbReference type="InterPro" id="IPR005170">
    <property type="entry name" value="Transptr-assoc_dom"/>
</dbReference>
<dbReference type="NCBIfam" id="NF003714">
    <property type="entry name" value="PRK05326.1-1"/>
    <property type="match status" value="1"/>
</dbReference>
<dbReference type="NCBIfam" id="NF003715">
    <property type="entry name" value="PRK05326.1-2"/>
    <property type="match status" value="1"/>
</dbReference>
<dbReference type="NCBIfam" id="NF003716">
    <property type="entry name" value="PRK05326.1-3"/>
    <property type="match status" value="1"/>
</dbReference>
<dbReference type="PANTHER" id="PTHR32507:SF7">
    <property type="entry name" value="K(+)_H(+) ANTIPORTER NHAP2"/>
    <property type="match status" value="1"/>
</dbReference>
<dbReference type="PANTHER" id="PTHR32507">
    <property type="entry name" value="NA(+)/H(+) ANTIPORTER 1"/>
    <property type="match status" value="1"/>
</dbReference>
<dbReference type="Pfam" id="PF03471">
    <property type="entry name" value="CorC_HlyC"/>
    <property type="match status" value="1"/>
</dbReference>
<dbReference type="Pfam" id="PF00999">
    <property type="entry name" value="Na_H_Exchanger"/>
    <property type="match status" value="1"/>
</dbReference>
<dbReference type="Pfam" id="PF02080">
    <property type="entry name" value="TrkA_C"/>
    <property type="match status" value="1"/>
</dbReference>
<dbReference type="SMART" id="SM01091">
    <property type="entry name" value="CorC_HlyC"/>
    <property type="match status" value="1"/>
</dbReference>
<dbReference type="SUPFAM" id="SSF56176">
    <property type="entry name" value="FAD-binding/transporter-associated domain-like"/>
    <property type="match status" value="1"/>
</dbReference>
<dbReference type="SUPFAM" id="SSF116726">
    <property type="entry name" value="TrkA C-terminal domain-like"/>
    <property type="match status" value="1"/>
</dbReference>
<dbReference type="PROSITE" id="PS51202">
    <property type="entry name" value="RCK_C"/>
    <property type="match status" value="1"/>
</dbReference>
<name>NHAP2_YERP3</name>
<sequence>MDAITINSLFLVGAVLVAASILLSSFSSRLGIPILVIFLAIGMLAGTDGLGGIAFDNYPAAYLVSNLALAVILLDGGMRTRASSFRVALWPALSLATFGVIITAGLTGLVAAWLFNLDIIQGLLIGAIIGSTDAAAVFSLLGGKGLNERVSATLEIESGSNDPMAVFLTVTLIAMIAAGETSLSWMFLVHLIQQFGLGIIIGLLGGGLLLLLINRMELANGLYPLLAVSGGILVFALATALNGSGILAVYLCGLLLGNRPIRNRAGILQTFDGLAWLSQIGMFLVLGLLLNPSDLLPIAIPALLLSLWMILFARPLSVFIGLLPFRSFNLRERVFISWVGLRGAVPVILAVFPMMAGLPNANLFFNVAFFVVLVSLLLQGTTLSFAARKAKLVVPPTLAPVSRIGLDIDMNNQWEQFIYQLSCDKWCIGATLRDLKMPQGTRIAALFRGKDLLHPTGSTRLKEGDILCVIGQEHDLPALGKLFSQSPNIQLDERFFGDFILDADAKLQDISQIYGLNLEPTVDKQQTLGQFVLYLFGGEPVIGDQIEWDGLTWTIAEMESDRVSRVGVKIVTDKA</sequence>
<feature type="chain" id="PRO_1000064678" description="K(+)/H(+) antiporter NhaP2">
    <location>
        <begin position="1"/>
        <end position="575"/>
    </location>
</feature>
<feature type="transmembrane region" description="Helical" evidence="1">
    <location>
        <begin position="3"/>
        <end position="23"/>
    </location>
</feature>
<feature type="transmembrane region" description="Helical" evidence="1">
    <location>
        <begin position="30"/>
        <end position="50"/>
    </location>
</feature>
<feature type="transmembrane region" description="Helical" evidence="1">
    <location>
        <begin position="58"/>
        <end position="78"/>
    </location>
</feature>
<feature type="transmembrane region" description="Helical" evidence="1">
    <location>
        <begin position="95"/>
        <end position="115"/>
    </location>
</feature>
<feature type="transmembrane region" description="Helical" evidence="1">
    <location>
        <begin position="122"/>
        <end position="142"/>
    </location>
</feature>
<feature type="transmembrane region" description="Helical" evidence="1">
    <location>
        <begin position="172"/>
        <end position="192"/>
    </location>
</feature>
<feature type="transmembrane region" description="Helical" evidence="1">
    <location>
        <begin position="194"/>
        <end position="214"/>
    </location>
</feature>
<feature type="transmembrane region" description="Helical" evidence="1">
    <location>
        <begin position="221"/>
        <end position="241"/>
    </location>
</feature>
<feature type="transmembrane region" description="Helical" evidence="1">
    <location>
        <begin position="244"/>
        <end position="261"/>
    </location>
</feature>
<feature type="transmembrane region" description="Helical" evidence="1">
    <location>
        <begin position="270"/>
        <end position="290"/>
    </location>
</feature>
<feature type="transmembrane region" description="Helical" evidence="1">
    <location>
        <begin position="293"/>
        <end position="313"/>
    </location>
</feature>
<feature type="transmembrane region" description="Helical" evidence="1">
    <location>
        <begin position="334"/>
        <end position="354"/>
    </location>
</feature>
<feature type="transmembrane region" description="Helical" evidence="1">
    <location>
        <begin position="363"/>
        <end position="383"/>
    </location>
</feature>
<feature type="domain" description="RCK C-terminal" evidence="1">
    <location>
        <begin position="403"/>
        <end position="485"/>
    </location>
</feature>
<proteinExistence type="inferred from homology"/>
<comment type="function">
    <text evidence="1">K(+)/H(+) antiporter that extrudes potassium in exchange for external protons and maintains the internal concentration of potassium under toxic levels.</text>
</comment>
<comment type="catalytic activity">
    <reaction evidence="1">
        <text>K(+)(in) + H(+)(out) = K(+)(out) + H(+)(in)</text>
        <dbReference type="Rhea" id="RHEA:29467"/>
        <dbReference type="ChEBI" id="CHEBI:15378"/>
        <dbReference type="ChEBI" id="CHEBI:29103"/>
    </reaction>
    <physiologicalReaction direction="left-to-right" evidence="1">
        <dbReference type="Rhea" id="RHEA:29468"/>
    </physiologicalReaction>
</comment>
<comment type="subcellular location">
    <subcellularLocation>
        <location evidence="1">Cell inner membrane</location>
        <topology evidence="1">Multi-pass membrane protein</topology>
    </subcellularLocation>
</comment>
<comment type="similarity">
    <text evidence="1">Belongs to the monovalent cation:proton antiporter 1 (CPA1) transporter (TC 2.A.36) family. NhaP2 subfamily.</text>
</comment>
<gene>
    <name evidence="1" type="primary">nhaP2</name>
    <name type="synonym">cvrA</name>
    <name type="ordered locus">YpsIP31758_1549</name>
</gene>
<accession>A7FGZ9</accession>
<protein>
    <recommendedName>
        <fullName evidence="1">K(+)/H(+) antiporter NhaP2</fullName>
    </recommendedName>
    <alternativeName>
        <fullName evidence="1">Potassium/proton antiporter NhaP2</fullName>
    </alternativeName>
</protein>
<organism>
    <name type="scientific">Yersinia pseudotuberculosis serotype O:1b (strain IP 31758)</name>
    <dbReference type="NCBI Taxonomy" id="349747"/>
    <lineage>
        <taxon>Bacteria</taxon>
        <taxon>Pseudomonadati</taxon>
        <taxon>Pseudomonadota</taxon>
        <taxon>Gammaproteobacteria</taxon>
        <taxon>Enterobacterales</taxon>
        <taxon>Yersiniaceae</taxon>
        <taxon>Yersinia</taxon>
    </lineage>
</organism>
<keyword id="KW-0050">Antiport</keyword>
<keyword id="KW-0997">Cell inner membrane</keyword>
<keyword id="KW-1003">Cell membrane</keyword>
<keyword id="KW-0406">Ion transport</keyword>
<keyword id="KW-0472">Membrane</keyword>
<keyword id="KW-0630">Potassium</keyword>
<keyword id="KW-0633">Potassium transport</keyword>
<keyword id="KW-0812">Transmembrane</keyword>
<keyword id="KW-1133">Transmembrane helix</keyword>
<keyword id="KW-0813">Transport</keyword>
<reference key="1">
    <citation type="journal article" date="2007" name="PLoS Genet.">
        <title>The complete genome sequence of Yersinia pseudotuberculosis IP31758, the causative agent of Far East scarlet-like fever.</title>
        <authorList>
            <person name="Eppinger M."/>
            <person name="Rosovitz M.J."/>
            <person name="Fricke W.F."/>
            <person name="Rasko D.A."/>
            <person name="Kokorina G."/>
            <person name="Fayolle C."/>
            <person name="Lindler L.E."/>
            <person name="Carniel E."/>
            <person name="Ravel J."/>
        </authorList>
    </citation>
    <scope>NUCLEOTIDE SEQUENCE [LARGE SCALE GENOMIC DNA]</scope>
    <source>
        <strain>IP 31758</strain>
    </source>
</reference>